<gene>
    <name evidence="1" type="primary">rplS</name>
    <name type="ordered locus">LSL_0636</name>
</gene>
<reference key="1">
    <citation type="journal article" date="2006" name="Proc. Natl. Acad. Sci. U.S.A.">
        <title>Multireplicon genome architecture of Lactobacillus salivarius.</title>
        <authorList>
            <person name="Claesson M.J."/>
            <person name="Li Y."/>
            <person name="Leahy S."/>
            <person name="Canchaya C."/>
            <person name="van Pijkeren J.P."/>
            <person name="Cerdeno-Tarraga A.M."/>
            <person name="Parkhill J."/>
            <person name="Flynn S."/>
            <person name="O'Sullivan G.C."/>
            <person name="Collins J.K."/>
            <person name="Higgins D."/>
            <person name="Shanahan F."/>
            <person name="Fitzgerald G.F."/>
            <person name="van Sinderen D."/>
            <person name="O'Toole P.W."/>
        </authorList>
    </citation>
    <scope>NUCLEOTIDE SEQUENCE [LARGE SCALE GENOMIC DNA]</scope>
    <source>
        <strain>UCC118</strain>
    </source>
</reference>
<keyword id="KW-1185">Reference proteome</keyword>
<keyword id="KW-0687">Ribonucleoprotein</keyword>
<keyword id="KW-0689">Ribosomal protein</keyword>
<proteinExistence type="inferred from homology"/>
<dbReference type="EMBL" id="CP000233">
    <property type="protein sequence ID" value="ABD99446.1"/>
    <property type="molecule type" value="Genomic_DNA"/>
</dbReference>
<dbReference type="RefSeq" id="WP_003701743.1">
    <property type="nucleotide sequence ID" value="NC_007929.1"/>
</dbReference>
<dbReference type="RefSeq" id="YP_535529.1">
    <property type="nucleotide sequence ID" value="NC_007929.1"/>
</dbReference>
<dbReference type="SMR" id="Q1WU89"/>
<dbReference type="STRING" id="362948.LSL_0636"/>
<dbReference type="GeneID" id="89465428"/>
<dbReference type="KEGG" id="lsl:LSL_0636"/>
<dbReference type="PATRIC" id="fig|362948.14.peg.716"/>
<dbReference type="HOGENOM" id="CLU_103507_2_1_9"/>
<dbReference type="OrthoDB" id="9803541at2"/>
<dbReference type="Proteomes" id="UP000006559">
    <property type="component" value="Chromosome"/>
</dbReference>
<dbReference type="GO" id="GO:0022625">
    <property type="term" value="C:cytosolic large ribosomal subunit"/>
    <property type="evidence" value="ECO:0007669"/>
    <property type="project" value="TreeGrafter"/>
</dbReference>
<dbReference type="GO" id="GO:0003735">
    <property type="term" value="F:structural constituent of ribosome"/>
    <property type="evidence" value="ECO:0007669"/>
    <property type="project" value="InterPro"/>
</dbReference>
<dbReference type="GO" id="GO:0006412">
    <property type="term" value="P:translation"/>
    <property type="evidence" value="ECO:0007669"/>
    <property type="project" value="UniProtKB-UniRule"/>
</dbReference>
<dbReference type="FunFam" id="2.30.30.790:FF:000001">
    <property type="entry name" value="50S ribosomal protein L19"/>
    <property type="match status" value="1"/>
</dbReference>
<dbReference type="Gene3D" id="2.30.30.790">
    <property type="match status" value="1"/>
</dbReference>
<dbReference type="HAMAP" id="MF_00402">
    <property type="entry name" value="Ribosomal_bL19"/>
    <property type="match status" value="1"/>
</dbReference>
<dbReference type="InterPro" id="IPR001857">
    <property type="entry name" value="Ribosomal_bL19"/>
</dbReference>
<dbReference type="InterPro" id="IPR018257">
    <property type="entry name" value="Ribosomal_bL19_CS"/>
</dbReference>
<dbReference type="InterPro" id="IPR038657">
    <property type="entry name" value="Ribosomal_bL19_sf"/>
</dbReference>
<dbReference type="InterPro" id="IPR008991">
    <property type="entry name" value="Translation_prot_SH3-like_sf"/>
</dbReference>
<dbReference type="NCBIfam" id="TIGR01024">
    <property type="entry name" value="rplS_bact"/>
    <property type="match status" value="1"/>
</dbReference>
<dbReference type="PANTHER" id="PTHR15680:SF9">
    <property type="entry name" value="LARGE RIBOSOMAL SUBUNIT PROTEIN BL19M"/>
    <property type="match status" value="1"/>
</dbReference>
<dbReference type="PANTHER" id="PTHR15680">
    <property type="entry name" value="RIBOSOMAL PROTEIN L19"/>
    <property type="match status" value="1"/>
</dbReference>
<dbReference type="Pfam" id="PF01245">
    <property type="entry name" value="Ribosomal_L19"/>
    <property type="match status" value="1"/>
</dbReference>
<dbReference type="PIRSF" id="PIRSF002191">
    <property type="entry name" value="Ribosomal_L19"/>
    <property type="match status" value="1"/>
</dbReference>
<dbReference type="PRINTS" id="PR00061">
    <property type="entry name" value="RIBOSOMALL19"/>
</dbReference>
<dbReference type="SUPFAM" id="SSF50104">
    <property type="entry name" value="Translation proteins SH3-like domain"/>
    <property type="match status" value="1"/>
</dbReference>
<dbReference type="PROSITE" id="PS01015">
    <property type="entry name" value="RIBOSOMAL_L19"/>
    <property type="match status" value="1"/>
</dbReference>
<organism>
    <name type="scientific">Ligilactobacillus salivarius (strain UCC118)</name>
    <name type="common">Lactobacillus salivarius</name>
    <dbReference type="NCBI Taxonomy" id="362948"/>
    <lineage>
        <taxon>Bacteria</taxon>
        <taxon>Bacillati</taxon>
        <taxon>Bacillota</taxon>
        <taxon>Bacilli</taxon>
        <taxon>Lactobacillales</taxon>
        <taxon>Lactobacillaceae</taxon>
        <taxon>Ligilactobacillus</taxon>
    </lineage>
</organism>
<sequence>MSVNPLIAKITESQLRNDIPDFRAGDSVRVHARIVEGSRERIQIFEGVVIKRRGEGISETYTVRKISNGIGVERTFPLHTPRVDKIEVTRHGRVRRAKLYYLRALHGKAARIPERRRG</sequence>
<evidence type="ECO:0000255" key="1">
    <source>
        <dbReference type="HAMAP-Rule" id="MF_00402"/>
    </source>
</evidence>
<evidence type="ECO:0000305" key="2"/>
<accession>Q1WU89</accession>
<feature type="chain" id="PRO_0000252515" description="Large ribosomal subunit protein bL19">
    <location>
        <begin position="1"/>
        <end position="118"/>
    </location>
</feature>
<comment type="function">
    <text evidence="1">This protein is located at the 30S-50S ribosomal subunit interface and may play a role in the structure and function of the aminoacyl-tRNA binding site.</text>
</comment>
<comment type="similarity">
    <text evidence="1">Belongs to the bacterial ribosomal protein bL19 family.</text>
</comment>
<protein>
    <recommendedName>
        <fullName evidence="1">Large ribosomal subunit protein bL19</fullName>
    </recommendedName>
    <alternativeName>
        <fullName evidence="2">50S ribosomal protein L19</fullName>
    </alternativeName>
</protein>
<name>RL19_LIGS1</name>